<gene>
    <name evidence="1" type="primary">hemA</name>
    <name type="ordered locus">CKO_01274</name>
</gene>
<reference key="1">
    <citation type="submission" date="2007-08" db="EMBL/GenBank/DDBJ databases">
        <authorList>
            <consortium name="The Citrobacter koseri Genome Sequencing Project"/>
            <person name="McClelland M."/>
            <person name="Sanderson E.K."/>
            <person name="Porwollik S."/>
            <person name="Spieth J."/>
            <person name="Clifton W.S."/>
            <person name="Latreille P."/>
            <person name="Courtney L."/>
            <person name="Wang C."/>
            <person name="Pepin K."/>
            <person name="Bhonagiri V."/>
            <person name="Nash W."/>
            <person name="Johnson M."/>
            <person name="Thiruvilangam P."/>
            <person name="Wilson R."/>
        </authorList>
    </citation>
    <scope>NUCLEOTIDE SEQUENCE [LARGE SCALE GENOMIC DNA]</scope>
    <source>
        <strain>ATCC BAA-895 / CDC 4225-83 / SGSC4696</strain>
    </source>
</reference>
<feature type="chain" id="PRO_1000004611" description="Glutamyl-tRNA reductase">
    <location>
        <begin position="1"/>
        <end position="418"/>
    </location>
</feature>
<feature type="active site" description="Nucleophile" evidence="1">
    <location>
        <position position="50"/>
    </location>
</feature>
<feature type="binding site" evidence="1">
    <location>
        <begin position="49"/>
        <end position="52"/>
    </location>
    <ligand>
        <name>substrate</name>
    </ligand>
</feature>
<feature type="binding site" evidence="1">
    <location>
        <position position="109"/>
    </location>
    <ligand>
        <name>substrate</name>
    </ligand>
</feature>
<feature type="binding site" evidence="1">
    <location>
        <begin position="114"/>
        <end position="116"/>
    </location>
    <ligand>
        <name>substrate</name>
    </ligand>
</feature>
<feature type="binding site" evidence="1">
    <location>
        <position position="120"/>
    </location>
    <ligand>
        <name>substrate</name>
    </ligand>
</feature>
<feature type="binding site" evidence="1">
    <location>
        <begin position="189"/>
        <end position="194"/>
    </location>
    <ligand>
        <name>NADP(+)</name>
        <dbReference type="ChEBI" id="CHEBI:58349"/>
    </ligand>
</feature>
<feature type="site" description="Important for activity" evidence="1">
    <location>
        <position position="99"/>
    </location>
</feature>
<proteinExistence type="inferred from homology"/>
<sequence length="418" mass="46223">MTLLALGINHKTAPVSLRERVTFSPDTLDQALDSLLAQPMVQGGVVLSTCNRTELYLSVEEQDNLQEALIRWLCDYHNLNEDDLRNSLYWHQDNDAVSHLMRVASGLDSLVLGEPQILGQVKKAFADSQKGHLHASALERMFQKSFSVAKRVRTETDIGASAVSVAFAACTLARQIFESLSTVTVLLVGAGETIELVARHLREHKVQKMIIANRTRERAQVLADEVGAEVISLSDIDERLREADIIISSTASPLPIIGKGMVERALKSRRNQPMLLVDIAVPRDVEPEVGKLANAYLYSVDDLQSIISHNLAQRKAAAVEAETIVAQEASEFMAWLRSQSASETIREYRSQSEHVRDELTVKALAALEQGGDAQAILQDLAWKLTNRLIHAPTKSLQQAARDGDDERLNILRDSLGLE</sequence>
<organism>
    <name type="scientific">Citrobacter koseri (strain ATCC BAA-895 / CDC 4225-83 / SGSC4696)</name>
    <dbReference type="NCBI Taxonomy" id="290338"/>
    <lineage>
        <taxon>Bacteria</taxon>
        <taxon>Pseudomonadati</taxon>
        <taxon>Pseudomonadota</taxon>
        <taxon>Gammaproteobacteria</taxon>
        <taxon>Enterobacterales</taxon>
        <taxon>Enterobacteriaceae</taxon>
        <taxon>Citrobacter</taxon>
    </lineage>
</organism>
<evidence type="ECO:0000255" key="1">
    <source>
        <dbReference type="HAMAP-Rule" id="MF_00087"/>
    </source>
</evidence>
<comment type="function">
    <text evidence="1">Catalyzes the NADPH-dependent reduction of glutamyl-tRNA(Glu) to glutamate 1-semialdehyde (GSA).</text>
</comment>
<comment type="catalytic activity">
    <reaction evidence="1">
        <text>(S)-4-amino-5-oxopentanoate + tRNA(Glu) + NADP(+) = L-glutamyl-tRNA(Glu) + NADPH + H(+)</text>
        <dbReference type="Rhea" id="RHEA:12344"/>
        <dbReference type="Rhea" id="RHEA-COMP:9663"/>
        <dbReference type="Rhea" id="RHEA-COMP:9680"/>
        <dbReference type="ChEBI" id="CHEBI:15378"/>
        <dbReference type="ChEBI" id="CHEBI:57501"/>
        <dbReference type="ChEBI" id="CHEBI:57783"/>
        <dbReference type="ChEBI" id="CHEBI:58349"/>
        <dbReference type="ChEBI" id="CHEBI:78442"/>
        <dbReference type="ChEBI" id="CHEBI:78520"/>
        <dbReference type="EC" id="1.2.1.70"/>
    </reaction>
</comment>
<comment type="pathway">
    <text evidence="1">Porphyrin-containing compound metabolism; protoporphyrin-IX biosynthesis; 5-aminolevulinate from L-glutamyl-tRNA(Glu): step 1/2.</text>
</comment>
<comment type="subunit">
    <text evidence="1">Homodimer.</text>
</comment>
<comment type="domain">
    <text evidence="1">Possesses an unusual extended V-shaped dimeric structure with each monomer consisting of three distinct domains arranged along a curved 'spinal' alpha-helix. The N-terminal catalytic domain specifically recognizes the glutamate moiety of the substrate. The second domain is the NADPH-binding domain, and the third C-terminal domain is responsible for dimerization.</text>
</comment>
<comment type="miscellaneous">
    <text evidence="1">During catalysis, the active site Cys acts as a nucleophile attacking the alpha-carbonyl group of tRNA-bound glutamate with the formation of a thioester intermediate between enzyme and glutamate, and the concomitant release of tRNA(Glu). The thioester intermediate is finally reduced by direct hydride transfer from NADPH, to form the product GSA.</text>
</comment>
<comment type="similarity">
    <text evidence="1">Belongs to the glutamyl-tRNA reductase family.</text>
</comment>
<dbReference type="EC" id="1.2.1.70" evidence="1"/>
<dbReference type="EMBL" id="CP000822">
    <property type="protein sequence ID" value="ABV12414.1"/>
    <property type="molecule type" value="Genomic_DNA"/>
</dbReference>
<dbReference type="RefSeq" id="WP_012132157.1">
    <property type="nucleotide sequence ID" value="NC_009792.1"/>
</dbReference>
<dbReference type="SMR" id="A8AG01"/>
<dbReference type="STRING" id="290338.CKO_01274"/>
<dbReference type="GeneID" id="45135390"/>
<dbReference type="KEGG" id="cko:CKO_01274"/>
<dbReference type="HOGENOM" id="CLU_035113_2_2_6"/>
<dbReference type="OrthoDB" id="110209at2"/>
<dbReference type="UniPathway" id="UPA00251">
    <property type="reaction ID" value="UER00316"/>
</dbReference>
<dbReference type="Proteomes" id="UP000008148">
    <property type="component" value="Chromosome"/>
</dbReference>
<dbReference type="GO" id="GO:0008883">
    <property type="term" value="F:glutamyl-tRNA reductase activity"/>
    <property type="evidence" value="ECO:0007669"/>
    <property type="project" value="UniProtKB-UniRule"/>
</dbReference>
<dbReference type="GO" id="GO:0050661">
    <property type="term" value="F:NADP binding"/>
    <property type="evidence" value="ECO:0007669"/>
    <property type="project" value="InterPro"/>
</dbReference>
<dbReference type="GO" id="GO:0019353">
    <property type="term" value="P:protoporphyrinogen IX biosynthetic process from glutamate"/>
    <property type="evidence" value="ECO:0007669"/>
    <property type="project" value="TreeGrafter"/>
</dbReference>
<dbReference type="CDD" id="cd05213">
    <property type="entry name" value="NAD_bind_Glutamyl_tRNA_reduct"/>
    <property type="match status" value="1"/>
</dbReference>
<dbReference type="FunFam" id="3.30.460.30:FF:000001">
    <property type="entry name" value="Glutamyl-tRNA reductase"/>
    <property type="match status" value="1"/>
</dbReference>
<dbReference type="FunFam" id="3.40.50.720:FF:000031">
    <property type="entry name" value="Glutamyl-tRNA reductase"/>
    <property type="match status" value="1"/>
</dbReference>
<dbReference type="Gene3D" id="3.30.460.30">
    <property type="entry name" value="Glutamyl-tRNA reductase, N-terminal domain"/>
    <property type="match status" value="1"/>
</dbReference>
<dbReference type="Gene3D" id="3.40.50.720">
    <property type="entry name" value="NAD(P)-binding Rossmann-like Domain"/>
    <property type="match status" value="1"/>
</dbReference>
<dbReference type="HAMAP" id="MF_00087">
    <property type="entry name" value="Glu_tRNA_reductase"/>
    <property type="match status" value="1"/>
</dbReference>
<dbReference type="InterPro" id="IPR000343">
    <property type="entry name" value="4pyrrol_synth_GluRdtase"/>
</dbReference>
<dbReference type="InterPro" id="IPR015896">
    <property type="entry name" value="4pyrrol_synth_GluRdtase_dimer"/>
</dbReference>
<dbReference type="InterPro" id="IPR015895">
    <property type="entry name" value="4pyrrol_synth_GluRdtase_N"/>
</dbReference>
<dbReference type="InterPro" id="IPR018214">
    <property type="entry name" value="GluRdtase_CS"/>
</dbReference>
<dbReference type="InterPro" id="IPR036453">
    <property type="entry name" value="GluRdtase_dimer_dom_sf"/>
</dbReference>
<dbReference type="InterPro" id="IPR036343">
    <property type="entry name" value="GluRdtase_N_sf"/>
</dbReference>
<dbReference type="InterPro" id="IPR036291">
    <property type="entry name" value="NAD(P)-bd_dom_sf"/>
</dbReference>
<dbReference type="InterPro" id="IPR006151">
    <property type="entry name" value="Shikm_DH/Glu-tRNA_Rdtase"/>
</dbReference>
<dbReference type="NCBIfam" id="TIGR01035">
    <property type="entry name" value="hemA"/>
    <property type="match status" value="1"/>
</dbReference>
<dbReference type="PANTHER" id="PTHR43013">
    <property type="entry name" value="GLUTAMYL-TRNA REDUCTASE"/>
    <property type="match status" value="1"/>
</dbReference>
<dbReference type="PANTHER" id="PTHR43013:SF1">
    <property type="entry name" value="GLUTAMYL-TRNA REDUCTASE"/>
    <property type="match status" value="1"/>
</dbReference>
<dbReference type="Pfam" id="PF00745">
    <property type="entry name" value="GlutR_dimer"/>
    <property type="match status" value="1"/>
</dbReference>
<dbReference type="Pfam" id="PF05201">
    <property type="entry name" value="GlutR_N"/>
    <property type="match status" value="1"/>
</dbReference>
<dbReference type="Pfam" id="PF01488">
    <property type="entry name" value="Shikimate_DH"/>
    <property type="match status" value="1"/>
</dbReference>
<dbReference type="PIRSF" id="PIRSF000445">
    <property type="entry name" value="4pyrrol_synth_GluRdtase"/>
    <property type="match status" value="1"/>
</dbReference>
<dbReference type="SUPFAM" id="SSF69742">
    <property type="entry name" value="Glutamyl tRNA-reductase catalytic, N-terminal domain"/>
    <property type="match status" value="1"/>
</dbReference>
<dbReference type="SUPFAM" id="SSF69075">
    <property type="entry name" value="Glutamyl tRNA-reductase dimerization domain"/>
    <property type="match status" value="1"/>
</dbReference>
<dbReference type="SUPFAM" id="SSF51735">
    <property type="entry name" value="NAD(P)-binding Rossmann-fold domains"/>
    <property type="match status" value="1"/>
</dbReference>
<dbReference type="PROSITE" id="PS00747">
    <property type="entry name" value="GLUTR"/>
    <property type="match status" value="1"/>
</dbReference>
<protein>
    <recommendedName>
        <fullName evidence="1">Glutamyl-tRNA reductase</fullName>
        <shortName evidence="1">GluTR</shortName>
        <ecNumber evidence="1">1.2.1.70</ecNumber>
    </recommendedName>
</protein>
<accession>A8AG01</accession>
<name>HEM1_CITK8</name>
<keyword id="KW-0521">NADP</keyword>
<keyword id="KW-0560">Oxidoreductase</keyword>
<keyword id="KW-0627">Porphyrin biosynthesis</keyword>
<keyword id="KW-1185">Reference proteome</keyword>